<sequence>MAAWSPSVGIGSCCLNNGITRTWKFPSARLFTGRKNKIKLGSETLMFTRKRFMGDLVTSALQSYQFSKICASKTSIELREALSSRRAEADDLKKVTSYSFRTKAGALVKVKVEKKREKYSILVYVSSLELSGDDKSRLVMVWGVYRSDSSCFLPLDFENSSQDSQTHTTETTFVKSSLSELMLGLEFDGKESPFYLSFHLKLVSGRDPDGQEMLTHRDTDFCIPVGFTAGHPLPLGLSSGPDDDSWNFSFFSRSSTNVVLCLYDDSTTDKPALELDLDPYVNRTGDVWHASVDNTWDFVRYGYRCKETAHSKEDVDVEGEPIVLDPYATVVGKSVSQKYLGSLSKSPSFDWGEDVSPNIPLEKLLVYRLNVKGFTQHRSSKLPSNVAGTFSGVAEKVSHLKTLGTNAVLLEPIFSFSEQKGPYFPFHFFSPMDIYGPSNSLESAVNSMKVMVKKLHSEGIEVLLEVVFTHTADSGALRGIDDSSYYYKGRANDLDSKSYLNCNYPVVQQLVLESLRYWVTEFHVDGFCFINASSLLRGVHGEQLSRPPLVEAIAFDPLLAETKLIADCWDPLEMMPKEVRFPHWKRWAELNTRYCRNVRNFLRGRGVLSDLATRICGSGDVFTDGRGPAFSFNYISRNSGLSLVDIVSFSGPELASELSWNCGEEGATNKSAVLQRRLKQIRNFLFIQYISLGVPVLNMGDECGISTRGSPLLESRKPFDWNLLASAFGTQITQFISFMTSVRARRSDVFQRRDFLKPENIVWYANDQTTPKWEDPASKFLALEIKSESEEEETASLAEPNEPKSNDLFIGFNASDHPESVVLPSLPDGSKWRRLVDTALPFPGFFSVEGETVVAEEPLQQLVVYEMKPYSCTLFETINTTA</sequence>
<name>ISOA2_ARATH</name>
<proteinExistence type="evidence at protein level"/>
<gene>
    <name type="primary">ISA2</name>
    <name type="synonym">DBE1</name>
    <name type="ordered locus">At1g03310</name>
    <name type="ORF">F15K9.9</name>
</gene>
<dbReference type="EMBL" id="AC005278">
    <property type="protein sequence ID" value="AAC72113.1"/>
    <property type="molecule type" value="Genomic_DNA"/>
</dbReference>
<dbReference type="EMBL" id="CP002684">
    <property type="protein sequence ID" value="AEE27557.1"/>
    <property type="molecule type" value="Genomic_DNA"/>
</dbReference>
<dbReference type="EMBL" id="CP002684">
    <property type="protein sequence ID" value="AEE27558.1"/>
    <property type="molecule type" value="Genomic_DNA"/>
</dbReference>
<dbReference type="EMBL" id="AY139980">
    <property type="protein sequence ID" value="AAM98123.1"/>
    <property type="molecule type" value="mRNA"/>
</dbReference>
<dbReference type="PIR" id="F86164">
    <property type="entry name" value="F86164"/>
</dbReference>
<dbReference type="RefSeq" id="NP_171830.1">
    <property type="nucleotide sequence ID" value="NM_100213.4"/>
</dbReference>
<dbReference type="RefSeq" id="NP_973751.1">
    <property type="nucleotide sequence ID" value="NM_202022.3"/>
</dbReference>
<dbReference type="SMR" id="Q8L735"/>
<dbReference type="FunCoup" id="Q8L735">
    <property type="interactions" value="980"/>
</dbReference>
<dbReference type="STRING" id="3702.Q8L735"/>
<dbReference type="CAZy" id="CBM48">
    <property type="family name" value="Carbohydrate-Binding Module Family 48"/>
</dbReference>
<dbReference type="CAZy" id="GH13">
    <property type="family name" value="Glycoside Hydrolase Family 13"/>
</dbReference>
<dbReference type="PaxDb" id="3702-AT1G03310.2"/>
<dbReference type="ProteomicsDB" id="228835"/>
<dbReference type="EnsemblPlants" id="AT1G03310.1">
    <property type="protein sequence ID" value="AT1G03310.1"/>
    <property type="gene ID" value="AT1G03310"/>
</dbReference>
<dbReference type="EnsemblPlants" id="AT1G03310.2">
    <property type="protein sequence ID" value="AT1G03310.2"/>
    <property type="gene ID" value="AT1G03310"/>
</dbReference>
<dbReference type="GeneID" id="839531"/>
<dbReference type="Gramene" id="AT1G03310.1">
    <property type="protein sequence ID" value="AT1G03310.1"/>
    <property type="gene ID" value="AT1G03310"/>
</dbReference>
<dbReference type="Gramene" id="AT1G03310.2">
    <property type="protein sequence ID" value="AT1G03310.2"/>
    <property type="gene ID" value="AT1G03310"/>
</dbReference>
<dbReference type="KEGG" id="ath:AT1G03310"/>
<dbReference type="Araport" id="AT1G03310"/>
<dbReference type="TAIR" id="AT1G03310">
    <property type="gene designation" value="DBE1"/>
</dbReference>
<dbReference type="eggNOG" id="KOG0470">
    <property type="taxonomic scope" value="Eukaryota"/>
</dbReference>
<dbReference type="HOGENOM" id="CLU_011725_2_0_1"/>
<dbReference type="InParanoid" id="Q8L735"/>
<dbReference type="OMA" id="MKSHSCA"/>
<dbReference type="PhylomeDB" id="Q8L735"/>
<dbReference type="BioCyc" id="ARA:AT1G03310-MONOMER"/>
<dbReference type="BioCyc" id="MetaCyc:AT1G03310-MONOMER"/>
<dbReference type="BRENDA" id="3.2.1.68">
    <property type="organism ID" value="399"/>
</dbReference>
<dbReference type="UniPathway" id="UPA00152"/>
<dbReference type="PRO" id="PR:Q8L735"/>
<dbReference type="Proteomes" id="UP000006548">
    <property type="component" value="Chromosome 1"/>
</dbReference>
<dbReference type="ExpressionAtlas" id="Q8L735">
    <property type="expression patterns" value="baseline and differential"/>
</dbReference>
<dbReference type="GO" id="GO:0009507">
    <property type="term" value="C:chloroplast"/>
    <property type="evidence" value="ECO:0007005"/>
    <property type="project" value="TAIR"/>
</dbReference>
<dbReference type="GO" id="GO:0043033">
    <property type="term" value="C:isoamylase complex"/>
    <property type="evidence" value="ECO:0007669"/>
    <property type="project" value="EnsemblPlants"/>
</dbReference>
<dbReference type="GO" id="GO:0019156">
    <property type="term" value="F:isoamylase activity"/>
    <property type="evidence" value="ECO:0000314"/>
    <property type="project" value="TAIR"/>
</dbReference>
<dbReference type="GO" id="GO:0010021">
    <property type="term" value="P:amylopectin biosynthetic process"/>
    <property type="evidence" value="ECO:0000315"/>
    <property type="project" value="TAIR"/>
</dbReference>
<dbReference type="GO" id="GO:0019252">
    <property type="term" value="P:starch biosynthetic process"/>
    <property type="evidence" value="ECO:0007669"/>
    <property type="project" value="UniProtKB-UniPathway"/>
</dbReference>
<dbReference type="GO" id="GO:0005983">
    <property type="term" value="P:starch catabolic process"/>
    <property type="evidence" value="ECO:0007669"/>
    <property type="project" value="EnsemblPlants"/>
</dbReference>
<dbReference type="CDD" id="cd11346">
    <property type="entry name" value="AmyAc_plant_IsoA"/>
    <property type="match status" value="1"/>
</dbReference>
<dbReference type="CDD" id="cd02856">
    <property type="entry name" value="E_set_GDE_Isoamylase_N"/>
    <property type="match status" value="1"/>
</dbReference>
<dbReference type="FunFam" id="3.20.20.80:FF:000148">
    <property type="entry name" value="Isoamylase 2, chloroplastic"/>
    <property type="match status" value="1"/>
</dbReference>
<dbReference type="Gene3D" id="3.20.20.80">
    <property type="entry name" value="Glycosidases"/>
    <property type="match status" value="1"/>
</dbReference>
<dbReference type="Gene3D" id="2.60.40.1180">
    <property type="entry name" value="Golgi alpha-mannosidase II"/>
    <property type="match status" value="1"/>
</dbReference>
<dbReference type="Gene3D" id="2.60.40.10">
    <property type="entry name" value="Immunoglobulins"/>
    <property type="match status" value="1"/>
</dbReference>
<dbReference type="InterPro" id="IPR044096">
    <property type="entry name" value="AmyAc_plant_ISA2"/>
</dbReference>
<dbReference type="InterPro" id="IPR044505">
    <property type="entry name" value="GlgX_Isoamylase_N_E_set"/>
</dbReference>
<dbReference type="InterPro" id="IPR006047">
    <property type="entry name" value="Glyco_hydro_13_cat_dom"/>
</dbReference>
<dbReference type="InterPro" id="IPR004193">
    <property type="entry name" value="Glyco_hydro_13_N"/>
</dbReference>
<dbReference type="InterPro" id="IPR013780">
    <property type="entry name" value="Glyco_hydro_b"/>
</dbReference>
<dbReference type="InterPro" id="IPR017853">
    <property type="entry name" value="Glycoside_hydrolase_SF"/>
</dbReference>
<dbReference type="InterPro" id="IPR013783">
    <property type="entry name" value="Ig-like_fold"/>
</dbReference>
<dbReference type="InterPro" id="IPR014756">
    <property type="entry name" value="Ig_E-set"/>
</dbReference>
<dbReference type="InterPro" id="IPR048650">
    <property type="entry name" value="ISOA1-3-like_C"/>
</dbReference>
<dbReference type="PANTHER" id="PTHR43002">
    <property type="entry name" value="GLYCOGEN DEBRANCHING ENZYME"/>
    <property type="match status" value="1"/>
</dbReference>
<dbReference type="Pfam" id="PF00128">
    <property type="entry name" value="Alpha-amylase"/>
    <property type="match status" value="1"/>
</dbReference>
<dbReference type="Pfam" id="PF02922">
    <property type="entry name" value="CBM_48"/>
    <property type="match status" value="1"/>
</dbReference>
<dbReference type="Pfam" id="PF21156">
    <property type="entry name" value="ISOA1-3_C"/>
    <property type="match status" value="1"/>
</dbReference>
<dbReference type="SMART" id="SM00642">
    <property type="entry name" value="Aamy"/>
    <property type="match status" value="1"/>
</dbReference>
<dbReference type="SUPFAM" id="SSF51445">
    <property type="entry name" value="(Trans)glycosidases"/>
    <property type="match status" value="1"/>
</dbReference>
<dbReference type="SUPFAM" id="SSF81296">
    <property type="entry name" value="E set domains"/>
    <property type="match status" value="1"/>
</dbReference>
<dbReference type="SUPFAM" id="SSF51011">
    <property type="entry name" value="Glycosyl hydrolase domain"/>
    <property type="match status" value="1"/>
</dbReference>
<comment type="function">
    <text evidence="1 4 5">Involved in the trimming of pre-amylopectin chains. Accelerates the crystallization of nascent amylopectin molecules during starch synthesis. ISA1 and ISA2 work exclusively together as a multimeric holoenzyme. ISA1-ISA2 removes preferentially branches that are very close to other branches.</text>
</comment>
<comment type="pathway">
    <text>Glycan biosynthesis; starch biosynthesis.</text>
</comment>
<comment type="subunit">
    <text>Associates with ISA1 to form the heteromultimeric complex Iso1 required for amylopectin synthesis.</text>
</comment>
<comment type="subcellular location">
    <subcellularLocation>
        <location evidence="3">Plastid</location>
        <location evidence="3">Chloroplast</location>
    </subcellularLocation>
</comment>
<comment type="disruption phenotype">
    <text evidence="1 2">Strong reduction of the starch level in leaves, but 50-fold increase of water-soluble polysaccharides. No alteration of the amylase-to-amylopectin ratio.</text>
</comment>
<comment type="similarity">
    <text evidence="6">Belongs to the glycosyl hydrolase 13 family.</text>
</comment>
<comment type="caution">
    <text evidence="6">Amino acids thought to be required for catalysis are not conserved in ISA2, suggesting that it may not be an active debranching enzyme and acts via its interaction with ISA1.</text>
</comment>
<protein>
    <recommendedName>
        <fullName>Isoamylase 2, chloroplastic</fullName>
        <shortName>AtISA2</shortName>
    </recommendedName>
    <alternativeName>
        <fullName>Protein DEBRANCHING ENZYME 1</fullName>
    </alternativeName>
</protein>
<reference key="1">
    <citation type="journal article" date="2000" name="Nature">
        <title>Sequence and analysis of chromosome 1 of the plant Arabidopsis thaliana.</title>
        <authorList>
            <person name="Theologis A."/>
            <person name="Ecker J.R."/>
            <person name="Palm C.J."/>
            <person name="Federspiel N.A."/>
            <person name="Kaul S."/>
            <person name="White O."/>
            <person name="Alonso J."/>
            <person name="Altafi H."/>
            <person name="Araujo R."/>
            <person name="Bowman C.L."/>
            <person name="Brooks S.Y."/>
            <person name="Buehler E."/>
            <person name="Chan A."/>
            <person name="Chao Q."/>
            <person name="Chen H."/>
            <person name="Cheuk R.F."/>
            <person name="Chin C.W."/>
            <person name="Chung M.K."/>
            <person name="Conn L."/>
            <person name="Conway A.B."/>
            <person name="Conway A.R."/>
            <person name="Creasy T.H."/>
            <person name="Dewar K."/>
            <person name="Dunn P."/>
            <person name="Etgu P."/>
            <person name="Feldblyum T.V."/>
            <person name="Feng J.-D."/>
            <person name="Fong B."/>
            <person name="Fujii C.Y."/>
            <person name="Gill J.E."/>
            <person name="Goldsmith A.D."/>
            <person name="Haas B."/>
            <person name="Hansen N.F."/>
            <person name="Hughes B."/>
            <person name="Huizar L."/>
            <person name="Hunter J.L."/>
            <person name="Jenkins J."/>
            <person name="Johnson-Hopson C."/>
            <person name="Khan S."/>
            <person name="Khaykin E."/>
            <person name="Kim C.J."/>
            <person name="Koo H.L."/>
            <person name="Kremenetskaia I."/>
            <person name="Kurtz D.B."/>
            <person name="Kwan A."/>
            <person name="Lam B."/>
            <person name="Langin-Hooper S."/>
            <person name="Lee A."/>
            <person name="Lee J.M."/>
            <person name="Lenz C.A."/>
            <person name="Li J.H."/>
            <person name="Li Y.-P."/>
            <person name="Lin X."/>
            <person name="Liu S.X."/>
            <person name="Liu Z.A."/>
            <person name="Luros J.S."/>
            <person name="Maiti R."/>
            <person name="Marziali A."/>
            <person name="Militscher J."/>
            <person name="Miranda M."/>
            <person name="Nguyen M."/>
            <person name="Nierman W.C."/>
            <person name="Osborne B.I."/>
            <person name="Pai G."/>
            <person name="Peterson J."/>
            <person name="Pham P.K."/>
            <person name="Rizzo M."/>
            <person name="Rooney T."/>
            <person name="Rowley D."/>
            <person name="Sakano H."/>
            <person name="Salzberg S.L."/>
            <person name="Schwartz J.R."/>
            <person name="Shinn P."/>
            <person name="Southwick A.M."/>
            <person name="Sun H."/>
            <person name="Tallon L.J."/>
            <person name="Tambunga G."/>
            <person name="Toriumi M.J."/>
            <person name="Town C.D."/>
            <person name="Utterback T."/>
            <person name="Van Aken S."/>
            <person name="Vaysberg M."/>
            <person name="Vysotskaia V.S."/>
            <person name="Walker M."/>
            <person name="Wu D."/>
            <person name="Yu G."/>
            <person name="Fraser C.M."/>
            <person name="Venter J.C."/>
            <person name="Davis R.W."/>
        </authorList>
    </citation>
    <scope>NUCLEOTIDE SEQUENCE [LARGE SCALE GENOMIC DNA]</scope>
    <source>
        <strain>cv. Columbia</strain>
    </source>
</reference>
<reference key="2">
    <citation type="journal article" date="2017" name="Plant J.">
        <title>Araport11: a complete reannotation of the Arabidopsis thaliana reference genome.</title>
        <authorList>
            <person name="Cheng C.Y."/>
            <person name="Krishnakumar V."/>
            <person name="Chan A.P."/>
            <person name="Thibaud-Nissen F."/>
            <person name="Schobel S."/>
            <person name="Town C.D."/>
        </authorList>
    </citation>
    <scope>GENOME REANNOTATION</scope>
    <source>
        <strain>cv. Columbia</strain>
    </source>
</reference>
<reference key="3">
    <citation type="journal article" date="2003" name="Science">
        <title>Empirical analysis of transcriptional activity in the Arabidopsis genome.</title>
        <authorList>
            <person name="Yamada K."/>
            <person name="Lim J."/>
            <person name="Dale J.M."/>
            <person name="Chen H."/>
            <person name="Shinn P."/>
            <person name="Palm C.J."/>
            <person name="Southwick A.M."/>
            <person name="Wu H.C."/>
            <person name="Kim C.J."/>
            <person name="Nguyen M."/>
            <person name="Pham P.K."/>
            <person name="Cheuk R.F."/>
            <person name="Karlin-Newmann G."/>
            <person name="Liu S.X."/>
            <person name="Lam B."/>
            <person name="Sakano H."/>
            <person name="Wu T."/>
            <person name="Yu G."/>
            <person name="Miranda M."/>
            <person name="Quach H.L."/>
            <person name="Tripp M."/>
            <person name="Chang C.H."/>
            <person name="Lee J.M."/>
            <person name="Toriumi M.J."/>
            <person name="Chan M.M."/>
            <person name="Tang C.C."/>
            <person name="Onodera C.S."/>
            <person name="Deng J.M."/>
            <person name="Akiyama K."/>
            <person name="Ansari Y."/>
            <person name="Arakawa T."/>
            <person name="Banh J."/>
            <person name="Banno F."/>
            <person name="Bowser L."/>
            <person name="Brooks S.Y."/>
            <person name="Carninci P."/>
            <person name="Chao Q."/>
            <person name="Choy N."/>
            <person name="Enju A."/>
            <person name="Goldsmith A.D."/>
            <person name="Gurjal M."/>
            <person name="Hansen N.F."/>
            <person name="Hayashizaki Y."/>
            <person name="Johnson-Hopson C."/>
            <person name="Hsuan V.W."/>
            <person name="Iida K."/>
            <person name="Karnes M."/>
            <person name="Khan S."/>
            <person name="Koesema E."/>
            <person name="Ishida J."/>
            <person name="Jiang P.X."/>
            <person name="Jones T."/>
            <person name="Kawai J."/>
            <person name="Kamiya A."/>
            <person name="Meyers C."/>
            <person name="Nakajima M."/>
            <person name="Narusaka M."/>
            <person name="Seki M."/>
            <person name="Sakurai T."/>
            <person name="Satou M."/>
            <person name="Tamse R."/>
            <person name="Vaysberg M."/>
            <person name="Wallender E.K."/>
            <person name="Wong C."/>
            <person name="Yamamura Y."/>
            <person name="Yuan S."/>
            <person name="Shinozaki K."/>
            <person name="Davis R.W."/>
            <person name="Theologis A."/>
            <person name="Ecker J.R."/>
        </authorList>
    </citation>
    <scope>NUCLEOTIDE SEQUENCE [LARGE SCALE MRNA]</scope>
    <source>
        <strain>cv. Columbia</strain>
    </source>
</reference>
<reference key="4">
    <citation type="journal article" date="2005" name="Plant J.">
        <title>Arabidopsis mutants Atisa1 and Atisa2 have identical phenotypes and lack the same multimeric isoamylase, which influences the branch point distribution of amylopectin during starch synthesis.</title>
        <authorList>
            <person name="Delatte T."/>
            <person name="Trevisan M."/>
            <person name="Parker M.L."/>
            <person name="Zeeman S.C."/>
        </authorList>
    </citation>
    <scope>FUNCTION</scope>
    <scope>INTERACTION WITH ISA1</scope>
    <scope>DISRUPTION PHENOTYPE</scope>
</reference>
<reference key="5">
    <citation type="journal article" date="2005" name="Plant Physiol.">
        <title>Mutants of Arabidopsis lacking a chloroplastic isoamylase accumulate phytoglycogen and an abnormal form of amylopectin.</title>
        <authorList>
            <person name="Wattebled F."/>
            <person name="Dong Y."/>
            <person name="Dumez S."/>
            <person name="Delvalle D."/>
            <person name="Planchot V."/>
            <person name="Berbezy P."/>
            <person name="Vyas D."/>
            <person name="Colonna P."/>
            <person name="Chatterjee M."/>
            <person name="Ball S."/>
            <person name="D'Hulst C."/>
        </authorList>
    </citation>
    <scope>INTERACTION WITH ISA1</scope>
    <scope>DISRUPTION PHENOTYPE</scope>
</reference>
<reference key="6">
    <citation type="journal article" date="2008" name="PLoS ONE">
        <title>Sorting signals, N-terminal modifications and abundance of the chloroplast proteome.</title>
        <authorList>
            <person name="Zybailov B."/>
            <person name="Rutschow H."/>
            <person name="Friso G."/>
            <person name="Rudella A."/>
            <person name="Emanuelsson O."/>
            <person name="Sun Q."/>
            <person name="van Wijk K.J."/>
        </authorList>
    </citation>
    <scope>IDENTIFICATION BY MASS SPECTROMETRY</scope>
    <scope>SUBCELLULAR LOCATION [LARGE SCALE ANALYSIS]</scope>
</reference>
<reference key="7">
    <citation type="journal article" date="2008" name="Plant Cell">
        <title>Starch granule biosynthesis in Arabidopsis is abolished by removal of all debranching enzymes but restored by the subsequent removal of an endoamylase.</title>
        <authorList>
            <person name="Streb S."/>
            <person name="Delatte T."/>
            <person name="Umhang M."/>
            <person name="Eicke S."/>
            <person name="Schorderet M."/>
            <person name="Reinhardt D."/>
            <person name="Zeeman S.C."/>
        </authorList>
    </citation>
    <scope>FUNCTION</scope>
</reference>
<reference key="8">
    <citation type="journal article" date="2008" name="Plant Physiol.">
        <title>Further evidence for the mandatory nature of polysaccharide debranching for the aggregation of semicrystalline starch and for overlapping functions of debranching enzymes in Arabidopsis leaves.</title>
        <authorList>
            <person name="Wattebled F."/>
            <person name="Planchot V."/>
            <person name="Dong Y."/>
            <person name="Szydlowski N."/>
            <person name="Pontoire B."/>
            <person name="Devin A."/>
            <person name="Ball S."/>
            <person name="D'Hulst C."/>
        </authorList>
    </citation>
    <scope>FUNCTION</scope>
</reference>
<organism>
    <name type="scientific">Arabidopsis thaliana</name>
    <name type="common">Mouse-ear cress</name>
    <dbReference type="NCBI Taxonomy" id="3702"/>
    <lineage>
        <taxon>Eukaryota</taxon>
        <taxon>Viridiplantae</taxon>
        <taxon>Streptophyta</taxon>
        <taxon>Embryophyta</taxon>
        <taxon>Tracheophyta</taxon>
        <taxon>Spermatophyta</taxon>
        <taxon>Magnoliopsida</taxon>
        <taxon>eudicotyledons</taxon>
        <taxon>Gunneridae</taxon>
        <taxon>Pentapetalae</taxon>
        <taxon>rosids</taxon>
        <taxon>malvids</taxon>
        <taxon>Brassicales</taxon>
        <taxon>Brassicaceae</taxon>
        <taxon>Camelineae</taxon>
        <taxon>Arabidopsis</taxon>
    </lineage>
</organism>
<keyword id="KW-0119">Carbohydrate metabolism</keyword>
<keyword id="KW-0150">Chloroplast</keyword>
<keyword id="KW-0934">Plastid</keyword>
<keyword id="KW-1185">Reference proteome</keyword>
<keyword id="KW-0750">Starch biosynthesis</keyword>
<keyword id="KW-0809">Transit peptide</keyword>
<accession>Q8L735</accession>
<accession>Q9ZVT2</accession>
<feature type="transit peptide" description="Chloroplast" evidence="6">
    <location>
        <begin position="1"/>
        <end position="70"/>
    </location>
</feature>
<feature type="chain" id="PRO_0000379528" description="Isoamylase 2, chloroplastic">
    <location>
        <begin position="71"/>
        <end position="882"/>
    </location>
</feature>
<feature type="sequence conflict" description="In Ref. 3; AAM98123." evidence="6" ref="3">
    <original>Q</original>
    <variation>R</variation>
    <location>
        <position position="211"/>
    </location>
</feature>
<evidence type="ECO:0000269" key="1">
    <source>
    </source>
</evidence>
<evidence type="ECO:0000269" key="2">
    <source>
    </source>
</evidence>
<evidence type="ECO:0000269" key="3">
    <source>
    </source>
</evidence>
<evidence type="ECO:0000269" key="4">
    <source>
    </source>
</evidence>
<evidence type="ECO:0000269" key="5">
    <source>
    </source>
</evidence>
<evidence type="ECO:0000305" key="6"/>